<reference key="1">
    <citation type="submission" date="2008-02" db="EMBL/GenBank/DDBJ databases">
        <title>Complete sequence of chromosome 1 of Burkholderia cenocepacia MC0-3.</title>
        <authorList>
            <person name="Copeland A."/>
            <person name="Lucas S."/>
            <person name="Lapidus A."/>
            <person name="Barry K."/>
            <person name="Bruce D."/>
            <person name="Goodwin L."/>
            <person name="Glavina del Rio T."/>
            <person name="Dalin E."/>
            <person name="Tice H."/>
            <person name="Pitluck S."/>
            <person name="Chain P."/>
            <person name="Malfatti S."/>
            <person name="Shin M."/>
            <person name="Vergez L."/>
            <person name="Schmutz J."/>
            <person name="Larimer F."/>
            <person name="Land M."/>
            <person name="Hauser L."/>
            <person name="Kyrpides N."/>
            <person name="Mikhailova N."/>
            <person name="Tiedje J."/>
            <person name="Richardson P."/>
        </authorList>
    </citation>
    <scope>NUCLEOTIDE SEQUENCE [LARGE SCALE GENOMIC DNA]</scope>
    <source>
        <strain>MC0-3</strain>
    </source>
</reference>
<protein>
    <recommendedName>
        <fullName evidence="1">Large ribosomal subunit protein uL1</fullName>
    </recommendedName>
    <alternativeName>
        <fullName evidence="2">50S ribosomal protein L1</fullName>
    </alternativeName>
</protein>
<gene>
    <name evidence="1" type="primary">rplA</name>
    <name type="ordered locus">Bcenmc03_0316</name>
</gene>
<accession>B1JU11</accession>
<sequence length="232" mass="24362">MAKISKRRQAFAAKVDRQKLYAIEDALSLVKECASAKFDESIDVAVQLGIDAKKSDQVVRGSVVLPAGTGKSVRVAVFAQGEKAEQARAAGAEIVGMEDLAEQIKAGQMDFDIVIASPDTMRIVGTLGQILGPRGLMPNPKVGTVTPDVATAVKNAKAGQVQFRVDKAGIIHATIGRASFEPTALRSNLSALIEALQKAKPATSKGVYLRKIALSSTMGVGVRVDHATLAAQ</sequence>
<dbReference type="EMBL" id="CP000958">
    <property type="protein sequence ID" value="ACA89496.1"/>
    <property type="molecule type" value="Genomic_DNA"/>
</dbReference>
<dbReference type="RefSeq" id="WP_006477200.1">
    <property type="nucleotide sequence ID" value="NC_010508.1"/>
</dbReference>
<dbReference type="SMR" id="B1JU11"/>
<dbReference type="GeneID" id="83047120"/>
<dbReference type="KEGG" id="bcm:Bcenmc03_0316"/>
<dbReference type="HOGENOM" id="CLU_062853_0_0_4"/>
<dbReference type="Proteomes" id="UP000002169">
    <property type="component" value="Chromosome 1"/>
</dbReference>
<dbReference type="GO" id="GO:0022625">
    <property type="term" value="C:cytosolic large ribosomal subunit"/>
    <property type="evidence" value="ECO:0007669"/>
    <property type="project" value="TreeGrafter"/>
</dbReference>
<dbReference type="GO" id="GO:0019843">
    <property type="term" value="F:rRNA binding"/>
    <property type="evidence" value="ECO:0007669"/>
    <property type="project" value="UniProtKB-UniRule"/>
</dbReference>
<dbReference type="GO" id="GO:0003735">
    <property type="term" value="F:structural constituent of ribosome"/>
    <property type="evidence" value="ECO:0007669"/>
    <property type="project" value="InterPro"/>
</dbReference>
<dbReference type="GO" id="GO:0000049">
    <property type="term" value="F:tRNA binding"/>
    <property type="evidence" value="ECO:0007669"/>
    <property type="project" value="UniProtKB-KW"/>
</dbReference>
<dbReference type="GO" id="GO:0006417">
    <property type="term" value="P:regulation of translation"/>
    <property type="evidence" value="ECO:0007669"/>
    <property type="project" value="UniProtKB-KW"/>
</dbReference>
<dbReference type="GO" id="GO:0006412">
    <property type="term" value="P:translation"/>
    <property type="evidence" value="ECO:0007669"/>
    <property type="project" value="UniProtKB-UniRule"/>
</dbReference>
<dbReference type="CDD" id="cd00403">
    <property type="entry name" value="Ribosomal_L1"/>
    <property type="match status" value="1"/>
</dbReference>
<dbReference type="FunFam" id="3.40.50.790:FF:000001">
    <property type="entry name" value="50S ribosomal protein L1"/>
    <property type="match status" value="1"/>
</dbReference>
<dbReference type="Gene3D" id="3.30.190.20">
    <property type="match status" value="1"/>
</dbReference>
<dbReference type="Gene3D" id="3.40.50.790">
    <property type="match status" value="1"/>
</dbReference>
<dbReference type="HAMAP" id="MF_01318_B">
    <property type="entry name" value="Ribosomal_uL1_B"/>
    <property type="match status" value="1"/>
</dbReference>
<dbReference type="InterPro" id="IPR005878">
    <property type="entry name" value="Ribosom_uL1_bac-type"/>
</dbReference>
<dbReference type="InterPro" id="IPR002143">
    <property type="entry name" value="Ribosomal_uL1"/>
</dbReference>
<dbReference type="InterPro" id="IPR023674">
    <property type="entry name" value="Ribosomal_uL1-like"/>
</dbReference>
<dbReference type="InterPro" id="IPR028364">
    <property type="entry name" value="Ribosomal_uL1/biogenesis"/>
</dbReference>
<dbReference type="InterPro" id="IPR016095">
    <property type="entry name" value="Ribosomal_uL1_3-a/b-sand"/>
</dbReference>
<dbReference type="InterPro" id="IPR023673">
    <property type="entry name" value="Ribosomal_uL1_CS"/>
</dbReference>
<dbReference type="NCBIfam" id="TIGR01169">
    <property type="entry name" value="rplA_bact"/>
    <property type="match status" value="1"/>
</dbReference>
<dbReference type="PANTHER" id="PTHR36427">
    <property type="entry name" value="54S RIBOSOMAL PROTEIN L1, MITOCHONDRIAL"/>
    <property type="match status" value="1"/>
</dbReference>
<dbReference type="PANTHER" id="PTHR36427:SF3">
    <property type="entry name" value="LARGE RIBOSOMAL SUBUNIT PROTEIN UL1M"/>
    <property type="match status" value="1"/>
</dbReference>
<dbReference type="Pfam" id="PF00687">
    <property type="entry name" value="Ribosomal_L1"/>
    <property type="match status" value="1"/>
</dbReference>
<dbReference type="PIRSF" id="PIRSF002155">
    <property type="entry name" value="Ribosomal_L1"/>
    <property type="match status" value="1"/>
</dbReference>
<dbReference type="SUPFAM" id="SSF56808">
    <property type="entry name" value="Ribosomal protein L1"/>
    <property type="match status" value="1"/>
</dbReference>
<dbReference type="PROSITE" id="PS01199">
    <property type="entry name" value="RIBOSOMAL_L1"/>
    <property type="match status" value="1"/>
</dbReference>
<evidence type="ECO:0000255" key="1">
    <source>
        <dbReference type="HAMAP-Rule" id="MF_01318"/>
    </source>
</evidence>
<evidence type="ECO:0000305" key="2"/>
<feature type="chain" id="PRO_1000141371" description="Large ribosomal subunit protein uL1">
    <location>
        <begin position="1"/>
        <end position="232"/>
    </location>
</feature>
<organism>
    <name type="scientific">Burkholderia orbicola (strain MC0-3)</name>
    <dbReference type="NCBI Taxonomy" id="406425"/>
    <lineage>
        <taxon>Bacteria</taxon>
        <taxon>Pseudomonadati</taxon>
        <taxon>Pseudomonadota</taxon>
        <taxon>Betaproteobacteria</taxon>
        <taxon>Burkholderiales</taxon>
        <taxon>Burkholderiaceae</taxon>
        <taxon>Burkholderia</taxon>
        <taxon>Burkholderia cepacia complex</taxon>
        <taxon>Burkholderia orbicola</taxon>
    </lineage>
</organism>
<name>RL1_BURO0</name>
<comment type="function">
    <text evidence="1">Binds directly to 23S rRNA. The L1 stalk is quite mobile in the ribosome, and is involved in E site tRNA release.</text>
</comment>
<comment type="function">
    <text evidence="1">Protein L1 is also a translational repressor protein, it controls the translation of the L11 operon by binding to its mRNA.</text>
</comment>
<comment type="subunit">
    <text evidence="1">Part of the 50S ribosomal subunit.</text>
</comment>
<comment type="similarity">
    <text evidence="1">Belongs to the universal ribosomal protein uL1 family.</text>
</comment>
<proteinExistence type="inferred from homology"/>
<keyword id="KW-0678">Repressor</keyword>
<keyword id="KW-0687">Ribonucleoprotein</keyword>
<keyword id="KW-0689">Ribosomal protein</keyword>
<keyword id="KW-0694">RNA-binding</keyword>
<keyword id="KW-0699">rRNA-binding</keyword>
<keyword id="KW-0810">Translation regulation</keyword>
<keyword id="KW-0820">tRNA-binding</keyword>